<proteinExistence type="inferred from homology"/>
<feature type="chain" id="PRO_0000189684" description="Gamma-glutamyl phosphate reductase">
    <location>
        <begin position="1"/>
        <end position="435"/>
    </location>
</feature>
<reference key="1">
    <citation type="journal article" date="1998" name="Nature">
        <title>The complete genome of the hyperthermophilic bacterium Aquifex aeolicus.</title>
        <authorList>
            <person name="Deckert G."/>
            <person name="Warren P.V."/>
            <person name="Gaasterland T."/>
            <person name="Young W.G."/>
            <person name="Lenox A.L."/>
            <person name="Graham D.E."/>
            <person name="Overbeek R."/>
            <person name="Snead M.A."/>
            <person name="Keller M."/>
            <person name="Aujay M."/>
            <person name="Huber R."/>
            <person name="Feldman R.A."/>
            <person name="Short J.M."/>
            <person name="Olsen G.J."/>
            <person name="Swanson R.V."/>
        </authorList>
    </citation>
    <scope>NUCLEOTIDE SEQUENCE [LARGE SCALE GENOMIC DNA]</scope>
    <source>
        <strain>VF5</strain>
    </source>
</reference>
<sequence length="435" mass="49119">MNYIEEKVNRARSVLRELTSLKTSVKNETLLKVAELIDKNRDYIKEENRKDVEKAKEMGLRPAVVDRLVLNDKRIDGMVKVLKDVASLPDPVGEIIKMWNLPNGLKVGRMRVPLGVIFIVYESRPNVTIEASSLCMKSSNAVILRGGKEAINSNKALVNLIKEACRETGFPEDAVQFIDRSEREIVWEILKMEGKIDVAIPRGGESLIRAVVEHAKVPVIKHYKGVCNIYVDDEADLEKAYHIVYNAKVQRPSVCNAVENLVINRKILKEFFPKMAYYLGKAGVELRCDEESLQVIKENPKLSFVNAKPATEEDYYEEFLDLILAVKVVDDVDEAIAFIEKYGSKHSDAIITENYTKAMKFLREVDSAAVYVNASTRFTDGNEFGLGAEMGISTDKIHARGPMALEELTIPKFVILGEGQVRDNFGVPEEWMKEF</sequence>
<keyword id="KW-0028">Amino-acid biosynthesis</keyword>
<keyword id="KW-0963">Cytoplasm</keyword>
<keyword id="KW-0521">NADP</keyword>
<keyword id="KW-0560">Oxidoreductase</keyword>
<keyword id="KW-0641">Proline biosynthesis</keyword>
<keyword id="KW-1185">Reference proteome</keyword>
<organism>
    <name type="scientific">Aquifex aeolicus (strain VF5)</name>
    <dbReference type="NCBI Taxonomy" id="224324"/>
    <lineage>
        <taxon>Bacteria</taxon>
        <taxon>Pseudomonadati</taxon>
        <taxon>Aquificota</taxon>
        <taxon>Aquificia</taxon>
        <taxon>Aquificales</taxon>
        <taxon>Aquificaceae</taxon>
        <taxon>Aquifex</taxon>
    </lineage>
</organism>
<protein>
    <recommendedName>
        <fullName evidence="1">Gamma-glutamyl phosphate reductase</fullName>
        <shortName evidence="1">GPR</shortName>
        <ecNumber evidence="1">1.2.1.41</ecNumber>
    </recommendedName>
    <alternativeName>
        <fullName evidence="1">Glutamate-5-semialdehyde dehydrogenase</fullName>
    </alternativeName>
    <alternativeName>
        <fullName evidence="1">Glutamyl-gamma-semialdehyde dehydrogenase</fullName>
        <shortName evidence="1">GSA dehydrogenase</shortName>
    </alternativeName>
</protein>
<dbReference type="EC" id="1.2.1.41" evidence="1"/>
<dbReference type="EMBL" id="AE000657">
    <property type="protein sequence ID" value="AAC07119.1"/>
    <property type="status" value="ALT_INIT"/>
    <property type="molecule type" value="Genomic_DNA"/>
</dbReference>
<dbReference type="PIR" id="C70392">
    <property type="entry name" value="C70392"/>
</dbReference>
<dbReference type="RefSeq" id="NP_213729.1">
    <property type="nucleotide sequence ID" value="NC_000918.1"/>
</dbReference>
<dbReference type="RefSeq" id="WP_208002273.1">
    <property type="nucleotide sequence ID" value="NC_000918.1"/>
</dbReference>
<dbReference type="SMR" id="O67166"/>
<dbReference type="FunCoup" id="O67166">
    <property type="interactions" value="358"/>
</dbReference>
<dbReference type="STRING" id="224324.aq_1071"/>
<dbReference type="EnsemblBacteria" id="AAC07119">
    <property type="protein sequence ID" value="AAC07119"/>
    <property type="gene ID" value="aq_1071"/>
</dbReference>
<dbReference type="KEGG" id="aae:aq_1071"/>
<dbReference type="PATRIC" id="fig|224324.8.peg.833"/>
<dbReference type="eggNOG" id="COG0014">
    <property type="taxonomic scope" value="Bacteria"/>
</dbReference>
<dbReference type="HOGENOM" id="CLU_030231_0_0_0"/>
<dbReference type="InParanoid" id="O67166"/>
<dbReference type="OrthoDB" id="9809970at2"/>
<dbReference type="UniPathway" id="UPA00098">
    <property type="reaction ID" value="UER00360"/>
</dbReference>
<dbReference type="Proteomes" id="UP000000798">
    <property type="component" value="Chromosome"/>
</dbReference>
<dbReference type="GO" id="GO:0005737">
    <property type="term" value="C:cytoplasm"/>
    <property type="evidence" value="ECO:0007669"/>
    <property type="project" value="UniProtKB-SubCell"/>
</dbReference>
<dbReference type="GO" id="GO:0004350">
    <property type="term" value="F:glutamate-5-semialdehyde dehydrogenase activity"/>
    <property type="evidence" value="ECO:0000318"/>
    <property type="project" value="GO_Central"/>
</dbReference>
<dbReference type="GO" id="GO:0050661">
    <property type="term" value="F:NADP binding"/>
    <property type="evidence" value="ECO:0007669"/>
    <property type="project" value="InterPro"/>
</dbReference>
<dbReference type="GO" id="GO:0055129">
    <property type="term" value="P:L-proline biosynthetic process"/>
    <property type="evidence" value="ECO:0007669"/>
    <property type="project" value="UniProtKB-UniRule"/>
</dbReference>
<dbReference type="CDD" id="cd07079">
    <property type="entry name" value="ALDH_F18-19_ProA-GPR"/>
    <property type="match status" value="1"/>
</dbReference>
<dbReference type="FunFam" id="3.40.309.10:FF:000006">
    <property type="entry name" value="Gamma-glutamyl phosphate reductase"/>
    <property type="match status" value="1"/>
</dbReference>
<dbReference type="Gene3D" id="3.40.605.10">
    <property type="entry name" value="Aldehyde Dehydrogenase, Chain A, domain 1"/>
    <property type="match status" value="1"/>
</dbReference>
<dbReference type="Gene3D" id="3.40.309.10">
    <property type="entry name" value="Aldehyde Dehydrogenase, Chain A, domain 2"/>
    <property type="match status" value="1"/>
</dbReference>
<dbReference type="HAMAP" id="MF_00412">
    <property type="entry name" value="ProA"/>
    <property type="match status" value="1"/>
</dbReference>
<dbReference type="InterPro" id="IPR016161">
    <property type="entry name" value="Ald_DH/histidinol_DH"/>
</dbReference>
<dbReference type="InterPro" id="IPR016163">
    <property type="entry name" value="Ald_DH_C"/>
</dbReference>
<dbReference type="InterPro" id="IPR016162">
    <property type="entry name" value="Ald_DH_N"/>
</dbReference>
<dbReference type="InterPro" id="IPR015590">
    <property type="entry name" value="Aldehyde_DH_dom"/>
</dbReference>
<dbReference type="InterPro" id="IPR020593">
    <property type="entry name" value="G-glutamylP_reductase_CS"/>
</dbReference>
<dbReference type="InterPro" id="IPR012134">
    <property type="entry name" value="Glu-5-SA_DH"/>
</dbReference>
<dbReference type="InterPro" id="IPR000965">
    <property type="entry name" value="GPR_dom"/>
</dbReference>
<dbReference type="NCBIfam" id="NF001221">
    <property type="entry name" value="PRK00197.1"/>
    <property type="match status" value="1"/>
</dbReference>
<dbReference type="NCBIfam" id="TIGR00407">
    <property type="entry name" value="proA"/>
    <property type="match status" value="1"/>
</dbReference>
<dbReference type="PANTHER" id="PTHR11063:SF8">
    <property type="entry name" value="DELTA-1-PYRROLINE-5-CARBOXYLATE SYNTHASE"/>
    <property type="match status" value="1"/>
</dbReference>
<dbReference type="PANTHER" id="PTHR11063">
    <property type="entry name" value="GLUTAMATE SEMIALDEHYDE DEHYDROGENASE"/>
    <property type="match status" value="1"/>
</dbReference>
<dbReference type="Pfam" id="PF00171">
    <property type="entry name" value="Aldedh"/>
    <property type="match status" value="1"/>
</dbReference>
<dbReference type="PIRSF" id="PIRSF000151">
    <property type="entry name" value="GPR"/>
    <property type="match status" value="1"/>
</dbReference>
<dbReference type="SUPFAM" id="SSF53720">
    <property type="entry name" value="ALDH-like"/>
    <property type="match status" value="1"/>
</dbReference>
<dbReference type="PROSITE" id="PS01223">
    <property type="entry name" value="PROA"/>
    <property type="match status" value="1"/>
</dbReference>
<accession>O67166</accession>
<gene>
    <name evidence="1" type="primary">proA</name>
    <name type="ordered locus">aq_1071</name>
</gene>
<comment type="function">
    <text evidence="1">Catalyzes the NADPH-dependent reduction of L-glutamate 5-phosphate into L-glutamate 5-semialdehyde and phosphate. The product spontaneously undergoes cyclization to form 1-pyrroline-5-carboxylate.</text>
</comment>
<comment type="catalytic activity">
    <reaction evidence="1">
        <text>L-glutamate 5-semialdehyde + phosphate + NADP(+) = L-glutamyl 5-phosphate + NADPH + H(+)</text>
        <dbReference type="Rhea" id="RHEA:19541"/>
        <dbReference type="ChEBI" id="CHEBI:15378"/>
        <dbReference type="ChEBI" id="CHEBI:43474"/>
        <dbReference type="ChEBI" id="CHEBI:57783"/>
        <dbReference type="ChEBI" id="CHEBI:58066"/>
        <dbReference type="ChEBI" id="CHEBI:58274"/>
        <dbReference type="ChEBI" id="CHEBI:58349"/>
        <dbReference type="EC" id="1.2.1.41"/>
    </reaction>
</comment>
<comment type="pathway">
    <text evidence="1">Amino-acid biosynthesis; L-proline biosynthesis; L-glutamate 5-semialdehyde from L-glutamate: step 2/2.</text>
</comment>
<comment type="subcellular location">
    <subcellularLocation>
        <location evidence="1">Cytoplasm</location>
    </subcellularLocation>
</comment>
<comment type="similarity">
    <text evidence="1">Belongs to the gamma-glutamyl phosphate reductase family.</text>
</comment>
<comment type="sequence caution" evidence="2">
    <conflict type="erroneous initiation">
        <sequence resource="EMBL-CDS" id="AAC07119"/>
    </conflict>
</comment>
<evidence type="ECO:0000255" key="1">
    <source>
        <dbReference type="HAMAP-Rule" id="MF_00412"/>
    </source>
</evidence>
<evidence type="ECO:0000305" key="2"/>
<name>PROA_AQUAE</name>